<keyword id="KW-0520">NAD</keyword>
<keyword id="KW-0521">NADP</keyword>
<keyword id="KW-0560">Oxidoreductase</keyword>
<keyword id="KW-1185">Reference proteome</keyword>
<keyword id="KW-0816">Tricarboxylic acid cycle</keyword>
<feature type="chain" id="PRO_0000113489" description="Malate dehydrogenase">
    <location>
        <begin position="1"/>
        <end position="325"/>
    </location>
</feature>
<feature type="active site" description="Proton acceptor" evidence="1">
    <location>
        <position position="177"/>
    </location>
</feature>
<feature type="binding site" evidence="2">
    <location>
        <begin position="7"/>
        <end position="13"/>
    </location>
    <ligand>
        <name>NADP(+)</name>
        <dbReference type="ChEBI" id="CHEBI:58349"/>
    </ligand>
</feature>
<feature type="binding site" evidence="1">
    <location>
        <position position="84"/>
    </location>
    <ligand>
        <name>substrate</name>
    </ligand>
</feature>
<feature type="binding site" evidence="1">
    <location>
        <position position="90"/>
    </location>
    <ligand>
        <name>substrate</name>
    </ligand>
</feature>
<feature type="binding site" evidence="2">
    <location>
        <position position="97"/>
    </location>
    <ligand>
        <name>NADP(+)</name>
        <dbReference type="ChEBI" id="CHEBI:58349"/>
    </ligand>
</feature>
<feature type="binding site" evidence="2">
    <location>
        <begin position="120"/>
        <end position="122"/>
    </location>
    <ligand>
        <name>NADP(+)</name>
        <dbReference type="ChEBI" id="CHEBI:58349"/>
    </ligand>
</feature>
<feature type="binding site" evidence="1">
    <location>
        <position position="122"/>
    </location>
    <ligand>
        <name>substrate</name>
    </ligand>
</feature>
<feature type="binding site" evidence="1">
    <location>
        <position position="153"/>
    </location>
    <ligand>
        <name>substrate</name>
    </ligand>
</feature>
<reference key="1">
    <citation type="journal article" date="1997" name="J. Bacteriol.">
        <title>Complete genome sequence of Methanobacterium thermoautotrophicum deltaH: functional analysis and comparative genomics.</title>
        <authorList>
            <person name="Smith D.R."/>
            <person name="Doucette-Stamm L.A."/>
            <person name="Deloughery C."/>
            <person name="Lee H.-M."/>
            <person name="Dubois J."/>
            <person name="Aldredge T."/>
            <person name="Bashirzadeh R."/>
            <person name="Blakely D."/>
            <person name="Cook R."/>
            <person name="Gilbert K."/>
            <person name="Harrison D."/>
            <person name="Hoang L."/>
            <person name="Keagle P."/>
            <person name="Lumm W."/>
            <person name="Pothier B."/>
            <person name="Qiu D."/>
            <person name="Spadafora R."/>
            <person name="Vicare R."/>
            <person name="Wang Y."/>
            <person name="Wierzbowski J."/>
            <person name="Gibson R."/>
            <person name="Jiwani N."/>
            <person name="Caruso A."/>
            <person name="Bush D."/>
            <person name="Safer H."/>
            <person name="Patwell D."/>
            <person name="Prabhakar S."/>
            <person name="McDougall S."/>
            <person name="Shimer G."/>
            <person name="Goyal A."/>
            <person name="Pietrovski S."/>
            <person name="Church G.M."/>
            <person name="Daniels C.J."/>
            <person name="Mao J.-I."/>
            <person name="Rice P."/>
            <person name="Noelling J."/>
            <person name="Reeve J.N."/>
        </authorList>
    </citation>
    <scope>NUCLEOTIDE SEQUENCE [LARGE SCALE GENOMIC DNA]</scope>
    <source>
        <strain>ATCC 29096 / DSM 1053 / JCM 10044 / NBRC 100330 / Delta H</strain>
    </source>
</reference>
<name>MDH_METTH</name>
<comment type="function">
    <text evidence="3">Catalyzes the reversible oxidation of malate to oxaloacetate.</text>
</comment>
<comment type="catalytic activity">
    <reaction evidence="3">
        <text>(S)-malate + NADP(+) = oxaloacetate + NADPH + H(+)</text>
        <dbReference type="Rhea" id="RHEA:10824"/>
        <dbReference type="ChEBI" id="CHEBI:15378"/>
        <dbReference type="ChEBI" id="CHEBI:15589"/>
        <dbReference type="ChEBI" id="CHEBI:16452"/>
        <dbReference type="ChEBI" id="CHEBI:57783"/>
        <dbReference type="ChEBI" id="CHEBI:58349"/>
        <dbReference type="EC" id="1.1.1.299"/>
    </reaction>
</comment>
<comment type="catalytic activity">
    <reaction evidence="3">
        <text>(S)-malate + NAD(+) = oxaloacetate + NADH + H(+)</text>
        <dbReference type="Rhea" id="RHEA:21432"/>
        <dbReference type="ChEBI" id="CHEBI:15378"/>
        <dbReference type="ChEBI" id="CHEBI:15589"/>
        <dbReference type="ChEBI" id="CHEBI:16452"/>
        <dbReference type="ChEBI" id="CHEBI:57540"/>
        <dbReference type="ChEBI" id="CHEBI:57945"/>
        <dbReference type="EC" id="1.1.1.299"/>
    </reaction>
</comment>
<comment type="similarity">
    <text evidence="4">Belongs to the LDH/MDH superfamily.</text>
</comment>
<sequence>MKVSIIGSTGRVGRATALCLAEEEAVKTLHLISRKESLEQNLGEVLDMSDALAAKGVSVKLENSADIENVYGSRIVVITAGVPRTADMDRDDLAFKNGRIVADYARQIARFAPDSIILVVTNPVDVMTYVALRYSGFHPSRVFGLGNHLDSLRLKNYMARHFNVHVSEVHTRVIGQHGPYMVPLISSTSIGGIPIEHYARRDYFSGYKKFDLKKTIDKVIHAGSNIISRKGATEYGPAFAISNIVTTILNDERRILTVSTLMEGEIDGIRDVCLGVPVKLGKNGIEGVVPVLMDRDEREAFREAANHVRDSTRRVMEFLDEELPL</sequence>
<evidence type="ECO:0000250" key="1">
    <source>
        <dbReference type="UniProtKB" id="P61889"/>
    </source>
</evidence>
<evidence type="ECO:0000250" key="2">
    <source>
        <dbReference type="UniProtKB" id="Q60176"/>
    </source>
</evidence>
<evidence type="ECO:0000250" key="3">
    <source>
        <dbReference type="UniProtKB" id="Q9YEA1"/>
    </source>
</evidence>
<evidence type="ECO:0000305" key="4"/>
<protein>
    <recommendedName>
        <fullName evidence="3">Malate dehydrogenase</fullName>
        <ecNumber evidence="3">1.1.1.299</ecNumber>
    </recommendedName>
</protein>
<gene>
    <name type="primary">mdh</name>
    <name type="ordered locus">MTH_188</name>
</gene>
<accession>O26290</accession>
<proteinExistence type="inferred from homology"/>
<organism>
    <name type="scientific">Methanothermobacter thermautotrophicus (strain ATCC 29096 / DSM 1053 / JCM 10044 / NBRC 100330 / Delta H)</name>
    <name type="common">Methanobacterium thermoautotrophicum</name>
    <dbReference type="NCBI Taxonomy" id="187420"/>
    <lineage>
        <taxon>Archaea</taxon>
        <taxon>Methanobacteriati</taxon>
        <taxon>Methanobacteriota</taxon>
        <taxon>Methanomada group</taxon>
        <taxon>Methanobacteria</taxon>
        <taxon>Methanobacteriales</taxon>
        <taxon>Methanobacteriaceae</taxon>
        <taxon>Methanothermobacter</taxon>
    </lineage>
</organism>
<dbReference type="EC" id="1.1.1.299" evidence="3"/>
<dbReference type="EMBL" id="AE000666">
    <property type="protein sequence ID" value="AAB84694.1"/>
    <property type="molecule type" value="Genomic_DNA"/>
</dbReference>
<dbReference type="PIR" id="E69118">
    <property type="entry name" value="E69118"/>
</dbReference>
<dbReference type="RefSeq" id="WP_010875827.1">
    <property type="nucleotide sequence ID" value="NC_000916.1"/>
</dbReference>
<dbReference type="SMR" id="O26290"/>
<dbReference type="FunCoup" id="O26290">
    <property type="interactions" value="107"/>
</dbReference>
<dbReference type="STRING" id="187420.MTH_188"/>
<dbReference type="PaxDb" id="187420-MTH_188"/>
<dbReference type="EnsemblBacteria" id="AAB84694">
    <property type="protein sequence ID" value="AAB84694"/>
    <property type="gene ID" value="MTH_188"/>
</dbReference>
<dbReference type="KEGG" id="mth:MTH_188"/>
<dbReference type="PATRIC" id="fig|187420.15.peg.160"/>
<dbReference type="HOGENOM" id="CLU_045401_2_2_2"/>
<dbReference type="InParanoid" id="O26290"/>
<dbReference type="BioCyc" id="MetaCyc:MONOMER-14545"/>
<dbReference type="Proteomes" id="UP000005223">
    <property type="component" value="Chromosome"/>
</dbReference>
<dbReference type="GO" id="GO:0004459">
    <property type="term" value="F:L-lactate dehydrogenase activity"/>
    <property type="evidence" value="ECO:0007669"/>
    <property type="project" value="TreeGrafter"/>
</dbReference>
<dbReference type="GO" id="GO:0030060">
    <property type="term" value="F:L-malate dehydrogenase (NAD+) activity"/>
    <property type="evidence" value="ECO:0007669"/>
    <property type="project" value="RHEA"/>
</dbReference>
<dbReference type="GO" id="GO:0046554">
    <property type="term" value="F:L-malate dehydrogenase (NADP+) activity"/>
    <property type="evidence" value="ECO:0007669"/>
    <property type="project" value="RHEA"/>
</dbReference>
<dbReference type="GO" id="GO:0006089">
    <property type="term" value="P:lactate metabolic process"/>
    <property type="evidence" value="ECO:0007669"/>
    <property type="project" value="TreeGrafter"/>
</dbReference>
<dbReference type="GO" id="GO:0006099">
    <property type="term" value="P:tricarboxylic acid cycle"/>
    <property type="evidence" value="ECO:0007669"/>
    <property type="project" value="UniProtKB-KW"/>
</dbReference>
<dbReference type="CDD" id="cd05294">
    <property type="entry name" value="LDH-like_MDH_nadp"/>
    <property type="match status" value="1"/>
</dbReference>
<dbReference type="Gene3D" id="3.90.110.10">
    <property type="entry name" value="Lactate dehydrogenase/glycoside hydrolase, family 4, C-terminal"/>
    <property type="match status" value="1"/>
</dbReference>
<dbReference type="Gene3D" id="3.40.50.720">
    <property type="entry name" value="NAD(P)-binding Rossmann-like Domain"/>
    <property type="match status" value="1"/>
</dbReference>
<dbReference type="InterPro" id="IPR001557">
    <property type="entry name" value="L-lactate/malate_DH"/>
</dbReference>
<dbReference type="InterPro" id="IPR022383">
    <property type="entry name" value="Lactate/malate_DH_C"/>
</dbReference>
<dbReference type="InterPro" id="IPR001236">
    <property type="entry name" value="Lactate/malate_DH_N"/>
</dbReference>
<dbReference type="InterPro" id="IPR015955">
    <property type="entry name" value="Lactate_DH/Glyco_Ohase_4_C"/>
</dbReference>
<dbReference type="InterPro" id="IPR036291">
    <property type="entry name" value="NAD(P)-bd_dom_sf"/>
</dbReference>
<dbReference type="NCBIfam" id="NF004863">
    <property type="entry name" value="PRK06223.1"/>
    <property type="match status" value="1"/>
</dbReference>
<dbReference type="PANTHER" id="PTHR43128">
    <property type="entry name" value="L-2-HYDROXYCARBOXYLATE DEHYDROGENASE (NAD(P)(+))"/>
    <property type="match status" value="1"/>
</dbReference>
<dbReference type="PANTHER" id="PTHR43128:SF16">
    <property type="entry name" value="L-LACTATE DEHYDROGENASE"/>
    <property type="match status" value="1"/>
</dbReference>
<dbReference type="Pfam" id="PF02866">
    <property type="entry name" value="Ldh_1_C"/>
    <property type="match status" value="1"/>
</dbReference>
<dbReference type="Pfam" id="PF00056">
    <property type="entry name" value="Ldh_1_N"/>
    <property type="match status" value="1"/>
</dbReference>
<dbReference type="PIRSF" id="PIRSF000102">
    <property type="entry name" value="Lac_mal_DH"/>
    <property type="match status" value="1"/>
</dbReference>
<dbReference type="PRINTS" id="PR00086">
    <property type="entry name" value="LLDHDRGNASE"/>
</dbReference>
<dbReference type="SUPFAM" id="SSF56327">
    <property type="entry name" value="LDH C-terminal domain-like"/>
    <property type="match status" value="1"/>
</dbReference>
<dbReference type="SUPFAM" id="SSF51735">
    <property type="entry name" value="NAD(P)-binding Rossmann-fold domains"/>
    <property type="match status" value="1"/>
</dbReference>